<reference key="1">
    <citation type="journal article" date="2010" name="J. Bacteriol.">
        <title>Complete genome sequence of the aerobic facultative methanotroph Methylocella silvestris BL2.</title>
        <authorList>
            <person name="Chen Y."/>
            <person name="Crombie A."/>
            <person name="Rahman M.T."/>
            <person name="Dedysh S.N."/>
            <person name="Liesack W."/>
            <person name="Stott M.B."/>
            <person name="Alam M."/>
            <person name="Theisen A.R."/>
            <person name="Murrell J.C."/>
            <person name="Dunfield P.F."/>
        </authorList>
    </citation>
    <scope>NUCLEOTIDE SEQUENCE [LARGE SCALE GENOMIC DNA]</scope>
    <source>
        <strain>DSM 15510 / CIP 108128 / LMG 27833 / NCIMB 13906 / BL2</strain>
    </source>
</reference>
<gene>
    <name evidence="1" type="primary">rpmJ</name>
    <name type="ordered locus">Msil_1786</name>
</gene>
<evidence type="ECO:0000255" key="1">
    <source>
        <dbReference type="HAMAP-Rule" id="MF_00251"/>
    </source>
</evidence>
<evidence type="ECO:0000305" key="2"/>
<accession>B8ELV1</accession>
<comment type="similarity">
    <text evidence="1">Belongs to the bacterial ribosomal protein bL36 family.</text>
</comment>
<protein>
    <recommendedName>
        <fullName evidence="1">Large ribosomal subunit protein bL36</fullName>
    </recommendedName>
    <alternativeName>
        <fullName evidence="2">50S ribosomal protein L36</fullName>
    </alternativeName>
</protein>
<dbReference type="EMBL" id="CP001280">
    <property type="protein sequence ID" value="ACK50732.1"/>
    <property type="molecule type" value="Genomic_DNA"/>
</dbReference>
<dbReference type="SMR" id="B8ELV1"/>
<dbReference type="STRING" id="395965.Msil_1786"/>
<dbReference type="KEGG" id="msl:Msil_1786"/>
<dbReference type="eggNOG" id="COG0257">
    <property type="taxonomic scope" value="Bacteria"/>
</dbReference>
<dbReference type="HOGENOM" id="CLU_135723_3_2_5"/>
<dbReference type="OrthoDB" id="9801558at2"/>
<dbReference type="Proteomes" id="UP000002257">
    <property type="component" value="Chromosome"/>
</dbReference>
<dbReference type="GO" id="GO:1990904">
    <property type="term" value="C:ribonucleoprotein complex"/>
    <property type="evidence" value="ECO:0007669"/>
    <property type="project" value="UniProtKB-KW"/>
</dbReference>
<dbReference type="GO" id="GO:0005840">
    <property type="term" value="C:ribosome"/>
    <property type="evidence" value="ECO:0007669"/>
    <property type="project" value="UniProtKB-KW"/>
</dbReference>
<dbReference type="GO" id="GO:0003735">
    <property type="term" value="F:structural constituent of ribosome"/>
    <property type="evidence" value="ECO:0007669"/>
    <property type="project" value="InterPro"/>
</dbReference>
<dbReference type="GO" id="GO:0006412">
    <property type="term" value="P:translation"/>
    <property type="evidence" value="ECO:0007669"/>
    <property type="project" value="UniProtKB-UniRule"/>
</dbReference>
<dbReference type="HAMAP" id="MF_00251">
    <property type="entry name" value="Ribosomal_bL36"/>
    <property type="match status" value="1"/>
</dbReference>
<dbReference type="InterPro" id="IPR000473">
    <property type="entry name" value="Ribosomal_bL36"/>
</dbReference>
<dbReference type="InterPro" id="IPR035977">
    <property type="entry name" value="Ribosomal_bL36_sp"/>
</dbReference>
<dbReference type="InterPro" id="IPR047621">
    <property type="entry name" value="Ribosomal_L36_bact"/>
</dbReference>
<dbReference type="NCBIfam" id="NF002021">
    <property type="entry name" value="PRK00831.1"/>
    <property type="match status" value="1"/>
</dbReference>
<dbReference type="NCBIfam" id="TIGR01022">
    <property type="entry name" value="rpmJ_bact"/>
    <property type="match status" value="1"/>
</dbReference>
<dbReference type="PANTHER" id="PTHR47781">
    <property type="entry name" value="50S RIBOSOMAL PROTEIN L36 2"/>
    <property type="match status" value="1"/>
</dbReference>
<dbReference type="PANTHER" id="PTHR47781:SF1">
    <property type="entry name" value="LARGE RIBOSOMAL SUBUNIT PROTEIN BL36B"/>
    <property type="match status" value="1"/>
</dbReference>
<dbReference type="Pfam" id="PF00444">
    <property type="entry name" value="Ribosomal_L36"/>
    <property type="match status" value="1"/>
</dbReference>
<dbReference type="SUPFAM" id="SSF57840">
    <property type="entry name" value="Ribosomal protein L36"/>
    <property type="match status" value="1"/>
</dbReference>
<sequence length="41" mass="5010">MKVRNSLKSLRGRHRDNQLVRRKGRVYIINKTQKRYKARQG</sequence>
<proteinExistence type="inferred from homology"/>
<keyword id="KW-1185">Reference proteome</keyword>
<keyword id="KW-0687">Ribonucleoprotein</keyword>
<keyword id="KW-0689">Ribosomal protein</keyword>
<feature type="chain" id="PRO_1000196197" description="Large ribosomal subunit protein bL36">
    <location>
        <begin position="1"/>
        <end position="41"/>
    </location>
</feature>
<organism>
    <name type="scientific">Methylocella silvestris (strain DSM 15510 / CIP 108128 / LMG 27833 / NCIMB 13906 / BL2)</name>
    <dbReference type="NCBI Taxonomy" id="395965"/>
    <lineage>
        <taxon>Bacteria</taxon>
        <taxon>Pseudomonadati</taxon>
        <taxon>Pseudomonadota</taxon>
        <taxon>Alphaproteobacteria</taxon>
        <taxon>Hyphomicrobiales</taxon>
        <taxon>Beijerinckiaceae</taxon>
        <taxon>Methylocella</taxon>
    </lineage>
</organism>
<name>RL36_METSB</name>